<sequence length="358" mass="39780">MKPSILEKLQQLGDRLEEVTHLLGQPEATSDMDNYRKLTREHAELTPVVEVFQNYRLAQSDLADAEEMLSDPEMKDFAAEEIEAAKAKIDELDTELQKLLLPKDADDDKNIFIEIRAGTGGDEAALFAGDLLRMYSRYAERNRWQVEIVSANESELGGYKEVIARIVGLGAYSRLKFESGGHRVQRVPATESQGRIHTSACTVAVMPEADELEDIELNPADLRTDTFRASGAGGQHINKTDSAVRITHLPTGMVVECQDGRSQHANKAQAMKVLAARLNDAQKREVQAKEAAERKSLIGSGDRSERIRTYNYPQGRVTDHRINLTLHKLDFVMDGDLAEITDALIAEHQAELLAAMGD</sequence>
<proteinExistence type="inferred from homology"/>
<dbReference type="EMBL" id="AE004969">
    <property type="protein sequence ID" value="AAW89987.1"/>
    <property type="molecule type" value="Genomic_DNA"/>
</dbReference>
<dbReference type="RefSeq" id="WP_003698734.1">
    <property type="nucleotide sequence ID" value="NC_002946.2"/>
</dbReference>
<dbReference type="RefSeq" id="YP_208399.1">
    <property type="nucleotide sequence ID" value="NC_002946.2"/>
</dbReference>
<dbReference type="SMR" id="Q5F750"/>
<dbReference type="STRING" id="242231.NGO_1337"/>
<dbReference type="KEGG" id="ngo:NGO_1337"/>
<dbReference type="PATRIC" id="fig|242231.10.peg.1571"/>
<dbReference type="HOGENOM" id="CLU_036856_0_1_4"/>
<dbReference type="Proteomes" id="UP000000535">
    <property type="component" value="Chromosome"/>
</dbReference>
<dbReference type="GO" id="GO:0005737">
    <property type="term" value="C:cytoplasm"/>
    <property type="evidence" value="ECO:0007669"/>
    <property type="project" value="UniProtKB-SubCell"/>
</dbReference>
<dbReference type="GO" id="GO:0016149">
    <property type="term" value="F:translation release factor activity, codon specific"/>
    <property type="evidence" value="ECO:0007669"/>
    <property type="project" value="UniProtKB-UniRule"/>
</dbReference>
<dbReference type="FunFam" id="3.30.160.20:FF:000004">
    <property type="entry name" value="Peptide chain release factor 1"/>
    <property type="match status" value="1"/>
</dbReference>
<dbReference type="FunFam" id="3.30.70.1660:FF:000002">
    <property type="entry name" value="Peptide chain release factor 1"/>
    <property type="match status" value="1"/>
</dbReference>
<dbReference type="FunFam" id="3.30.70.1660:FF:000004">
    <property type="entry name" value="Peptide chain release factor 1"/>
    <property type="match status" value="1"/>
</dbReference>
<dbReference type="Gene3D" id="3.30.160.20">
    <property type="match status" value="1"/>
</dbReference>
<dbReference type="Gene3D" id="3.30.70.1660">
    <property type="match status" value="2"/>
</dbReference>
<dbReference type="Gene3D" id="6.10.140.1950">
    <property type="match status" value="1"/>
</dbReference>
<dbReference type="HAMAP" id="MF_00093">
    <property type="entry name" value="Rel_fac_1"/>
    <property type="match status" value="1"/>
</dbReference>
<dbReference type="InterPro" id="IPR005139">
    <property type="entry name" value="PCRF"/>
</dbReference>
<dbReference type="InterPro" id="IPR000352">
    <property type="entry name" value="Pep_chain_release_fac_I"/>
</dbReference>
<dbReference type="InterPro" id="IPR045853">
    <property type="entry name" value="Pep_chain_release_fac_I_sf"/>
</dbReference>
<dbReference type="InterPro" id="IPR050057">
    <property type="entry name" value="Prokaryotic/Mito_RF"/>
</dbReference>
<dbReference type="InterPro" id="IPR004373">
    <property type="entry name" value="RF-1"/>
</dbReference>
<dbReference type="NCBIfam" id="TIGR00019">
    <property type="entry name" value="prfA"/>
    <property type="match status" value="1"/>
</dbReference>
<dbReference type="NCBIfam" id="NF001859">
    <property type="entry name" value="PRK00591.1"/>
    <property type="match status" value="1"/>
</dbReference>
<dbReference type="PANTHER" id="PTHR43804">
    <property type="entry name" value="LD18447P"/>
    <property type="match status" value="1"/>
</dbReference>
<dbReference type="PANTHER" id="PTHR43804:SF7">
    <property type="entry name" value="LD18447P"/>
    <property type="match status" value="1"/>
</dbReference>
<dbReference type="Pfam" id="PF03462">
    <property type="entry name" value="PCRF"/>
    <property type="match status" value="1"/>
</dbReference>
<dbReference type="Pfam" id="PF00472">
    <property type="entry name" value="RF-1"/>
    <property type="match status" value="1"/>
</dbReference>
<dbReference type="SMART" id="SM00937">
    <property type="entry name" value="PCRF"/>
    <property type="match status" value="1"/>
</dbReference>
<dbReference type="SUPFAM" id="SSF75620">
    <property type="entry name" value="Release factor"/>
    <property type="match status" value="1"/>
</dbReference>
<dbReference type="PROSITE" id="PS00745">
    <property type="entry name" value="RF_PROK_I"/>
    <property type="match status" value="1"/>
</dbReference>
<protein>
    <recommendedName>
        <fullName evidence="1">Peptide chain release factor 1</fullName>
        <shortName evidence="1">RF-1</shortName>
    </recommendedName>
</protein>
<gene>
    <name evidence="1" type="primary">prfA</name>
    <name type="ordered locus">NGO_1337</name>
</gene>
<organism>
    <name type="scientific">Neisseria gonorrhoeae (strain ATCC 700825 / FA 1090)</name>
    <dbReference type="NCBI Taxonomy" id="242231"/>
    <lineage>
        <taxon>Bacteria</taxon>
        <taxon>Pseudomonadati</taxon>
        <taxon>Pseudomonadota</taxon>
        <taxon>Betaproteobacteria</taxon>
        <taxon>Neisseriales</taxon>
        <taxon>Neisseriaceae</taxon>
        <taxon>Neisseria</taxon>
    </lineage>
</organism>
<comment type="function">
    <text evidence="1">Peptide chain release factor 1 directs the termination of translation in response to the peptide chain termination codons UAG and UAA.</text>
</comment>
<comment type="subcellular location">
    <subcellularLocation>
        <location evidence="1">Cytoplasm</location>
    </subcellularLocation>
</comment>
<comment type="PTM">
    <text evidence="1">Methylated by PrmC. Methylation increases the termination efficiency of RF1.</text>
</comment>
<comment type="similarity">
    <text evidence="1">Belongs to the prokaryotic/mitochondrial release factor family.</text>
</comment>
<name>RF1_NEIG1</name>
<evidence type="ECO:0000255" key="1">
    <source>
        <dbReference type="HAMAP-Rule" id="MF_00093"/>
    </source>
</evidence>
<feature type="chain" id="PRO_0000263303" description="Peptide chain release factor 1">
    <location>
        <begin position="1"/>
        <end position="358"/>
    </location>
</feature>
<feature type="modified residue" description="N5-methylglutamine" evidence="1">
    <location>
        <position position="235"/>
    </location>
</feature>
<accession>Q5F750</accession>
<keyword id="KW-0963">Cytoplasm</keyword>
<keyword id="KW-0488">Methylation</keyword>
<keyword id="KW-0648">Protein biosynthesis</keyword>
<keyword id="KW-1185">Reference proteome</keyword>
<reference key="1">
    <citation type="submission" date="2003-03" db="EMBL/GenBank/DDBJ databases">
        <title>The complete genome sequence of Neisseria gonorrhoeae.</title>
        <authorList>
            <person name="Lewis L.A."/>
            <person name="Gillaspy A.F."/>
            <person name="McLaughlin R.E."/>
            <person name="Gipson M."/>
            <person name="Ducey T.F."/>
            <person name="Ownbey T."/>
            <person name="Hartman K."/>
            <person name="Nydick C."/>
            <person name="Carson M.B."/>
            <person name="Vaughn J."/>
            <person name="Thomson C."/>
            <person name="Song L."/>
            <person name="Lin S."/>
            <person name="Yuan X."/>
            <person name="Najar F."/>
            <person name="Zhan M."/>
            <person name="Ren Q."/>
            <person name="Zhu H."/>
            <person name="Qi S."/>
            <person name="Kenton S.M."/>
            <person name="Lai H."/>
            <person name="White J.D."/>
            <person name="Clifton S."/>
            <person name="Roe B.A."/>
            <person name="Dyer D.W."/>
        </authorList>
    </citation>
    <scope>NUCLEOTIDE SEQUENCE [LARGE SCALE GENOMIC DNA]</scope>
    <source>
        <strain>ATCC 700825 / FA 1090</strain>
    </source>
</reference>